<gene>
    <name evidence="1" type="primary">argS</name>
    <name type="ordered locus">Avin_45360</name>
</gene>
<organism>
    <name type="scientific">Azotobacter vinelandii (strain DJ / ATCC BAA-1303)</name>
    <dbReference type="NCBI Taxonomy" id="322710"/>
    <lineage>
        <taxon>Bacteria</taxon>
        <taxon>Pseudomonadati</taxon>
        <taxon>Pseudomonadota</taxon>
        <taxon>Gammaproteobacteria</taxon>
        <taxon>Pseudomonadales</taxon>
        <taxon>Pseudomonadaceae</taxon>
        <taxon>Azotobacter</taxon>
    </lineage>
</organism>
<dbReference type="EC" id="6.1.1.19" evidence="1"/>
<dbReference type="EMBL" id="CP001157">
    <property type="protein sequence ID" value="ACO80650.1"/>
    <property type="molecule type" value="Genomic_DNA"/>
</dbReference>
<dbReference type="RefSeq" id="WP_012703017.1">
    <property type="nucleotide sequence ID" value="NC_012560.1"/>
</dbReference>
<dbReference type="SMR" id="C1DHR7"/>
<dbReference type="STRING" id="322710.Avin_45360"/>
<dbReference type="EnsemblBacteria" id="ACO80650">
    <property type="protein sequence ID" value="ACO80650"/>
    <property type="gene ID" value="Avin_45360"/>
</dbReference>
<dbReference type="GeneID" id="88187420"/>
<dbReference type="KEGG" id="avn:Avin_45360"/>
<dbReference type="eggNOG" id="COG0018">
    <property type="taxonomic scope" value="Bacteria"/>
</dbReference>
<dbReference type="HOGENOM" id="CLU_006406_5_1_6"/>
<dbReference type="OrthoDB" id="9803211at2"/>
<dbReference type="Proteomes" id="UP000002424">
    <property type="component" value="Chromosome"/>
</dbReference>
<dbReference type="GO" id="GO:0005737">
    <property type="term" value="C:cytoplasm"/>
    <property type="evidence" value="ECO:0007669"/>
    <property type="project" value="UniProtKB-SubCell"/>
</dbReference>
<dbReference type="GO" id="GO:0004814">
    <property type="term" value="F:arginine-tRNA ligase activity"/>
    <property type="evidence" value="ECO:0007669"/>
    <property type="project" value="UniProtKB-UniRule"/>
</dbReference>
<dbReference type="GO" id="GO:0005524">
    <property type="term" value="F:ATP binding"/>
    <property type="evidence" value="ECO:0007669"/>
    <property type="project" value="UniProtKB-UniRule"/>
</dbReference>
<dbReference type="GO" id="GO:0006420">
    <property type="term" value="P:arginyl-tRNA aminoacylation"/>
    <property type="evidence" value="ECO:0007669"/>
    <property type="project" value="UniProtKB-UniRule"/>
</dbReference>
<dbReference type="CDD" id="cd00671">
    <property type="entry name" value="ArgRS_core"/>
    <property type="match status" value="1"/>
</dbReference>
<dbReference type="FunFam" id="3.30.1360.70:FF:000003">
    <property type="entry name" value="Arginine--tRNA ligase"/>
    <property type="match status" value="1"/>
</dbReference>
<dbReference type="FunFam" id="3.40.50.620:FF:000030">
    <property type="entry name" value="Arginine--tRNA ligase"/>
    <property type="match status" value="1"/>
</dbReference>
<dbReference type="FunFam" id="1.10.730.10:FF:000006">
    <property type="entry name" value="Arginyl-tRNA synthetase 2, mitochondrial"/>
    <property type="match status" value="1"/>
</dbReference>
<dbReference type="Gene3D" id="3.30.1360.70">
    <property type="entry name" value="Arginyl tRNA synthetase N-terminal domain"/>
    <property type="match status" value="1"/>
</dbReference>
<dbReference type="Gene3D" id="3.40.50.620">
    <property type="entry name" value="HUPs"/>
    <property type="match status" value="1"/>
</dbReference>
<dbReference type="Gene3D" id="1.10.730.10">
    <property type="entry name" value="Isoleucyl-tRNA Synthetase, Domain 1"/>
    <property type="match status" value="1"/>
</dbReference>
<dbReference type="HAMAP" id="MF_00123">
    <property type="entry name" value="Arg_tRNA_synth"/>
    <property type="match status" value="1"/>
</dbReference>
<dbReference type="InterPro" id="IPR001412">
    <property type="entry name" value="aa-tRNA-synth_I_CS"/>
</dbReference>
<dbReference type="InterPro" id="IPR001278">
    <property type="entry name" value="Arg-tRNA-ligase"/>
</dbReference>
<dbReference type="InterPro" id="IPR005148">
    <property type="entry name" value="Arg-tRNA-synth_N"/>
</dbReference>
<dbReference type="InterPro" id="IPR036695">
    <property type="entry name" value="Arg-tRNA-synth_N_sf"/>
</dbReference>
<dbReference type="InterPro" id="IPR035684">
    <property type="entry name" value="ArgRS_core"/>
</dbReference>
<dbReference type="InterPro" id="IPR008909">
    <property type="entry name" value="DALR_anticod-bd"/>
</dbReference>
<dbReference type="InterPro" id="IPR014729">
    <property type="entry name" value="Rossmann-like_a/b/a_fold"/>
</dbReference>
<dbReference type="InterPro" id="IPR009080">
    <property type="entry name" value="tRNAsynth_Ia_anticodon-bd"/>
</dbReference>
<dbReference type="NCBIfam" id="TIGR00456">
    <property type="entry name" value="argS"/>
    <property type="match status" value="1"/>
</dbReference>
<dbReference type="PANTHER" id="PTHR11956:SF5">
    <property type="entry name" value="ARGININE--TRNA LIGASE, CYTOPLASMIC"/>
    <property type="match status" value="1"/>
</dbReference>
<dbReference type="PANTHER" id="PTHR11956">
    <property type="entry name" value="ARGINYL-TRNA SYNTHETASE"/>
    <property type="match status" value="1"/>
</dbReference>
<dbReference type="Pfam" id="PF03485">
    <property type="entry name" value="Arg_tRNA_synt_N"/>
    <property type="match status" value="1"/>
</dbReference>
<dbReference type="Pfam" id="PF05746">
    <property type="entry name" value="DALR_1"/>
    <property type="match status" value="1"/>
</dbReference>
<dbReference type="Pfam" id="PF00750">
    <property type="entry name" value="tRNA-synt_1d"/>
    <property type="match status" value="1"/>
</dbReference>
<dbReference type="PRINTS" id="PR01038">
    <property type="entry name" value="TRNASYNTHARG"/>
</dbReference>
<dbReference type="SMART" id="SM01016">
    <property type="entry name" value="Arg_tRNA_synt_N"/>
    <property type="match status" value="1"/>
</dbReference>
<dbReference type="SMART" id="SM00836">
    <property type="entry name" value="DALR_1"/>
    <property type="match status" value="1"/>
</dbReference>
<dbReference type="SUPFAM" id="SSF47323">
    <property type="entry name" value="Anticodon-binding domain of a subclass of class I aminoacyl-tRNA synthetases"/>
    <property type="match status" value="1"/>
</dbReference>
<dbReference type="SUPFAM" id="SSF55190">
    <property type="entry name" value="Arginyl-tRNA synthetase (ArgRS), N-terminal 'additional' domain"/>
    <property type="match status" value="1"/>
</dbReference>
<dbReference type="SUPFAM" id="SSF52374">
    <property type="entry name" value="Nucleotidylyl transferase"/>
    <property type="match status" value="1"/>
</dbReference>
<dbReference type="PROSITE" id="PS00178">
    <property type="entry name" value="AA_TRNA_LIGASE_I"/>
    <property type="match status" value="1"/>
</dbReference>
<comment type="catalytic activity">
    <reaction evidence="1">
        <text>tRNA(Arg) + L-arginine + ATP = L-arginyl-tRNA(Arg) + AMP + diphosphate</text>
        <dbReference type="Rhea" id="RHEA:20301"/>
        <dbReference type="Rhea" id="RHEA-COMP:9658"/>
        <dbReference type="Rhea" id="RHEA-COMP:9673"/>
        <dbReference type="ChEBI" id="CHEBI:30616"/>
        <dbReference type="ChEBI" id="CHEBI:32682"/>
        <dbReference type="ChEBI" id="CHEBI:33019"/>
        <dbReference type="ChEBI" id="CHEBI:78442"/>
        <dbReference type="ChEBI" id="CHEBI:78513"/>
        <dbReference type="ChEBI" id="CHEBI:456215"/>
        <dbReference type="EC" id="6.1.1.19"/>
    </reaction>
</comment>
<comment type="subunit">
    <text evidence="1">Monomer.</text>
</comment>
<comment type="subcellular location">
    <subcellularLocation>
        <location evidence="1">Cytoplasm</location>
    </subcellularLocation>
</comment>
<comment type="similarity">
    <text evidence="1">Belongs to the class-I aminoacyl-tRNA synthetase family.</text>
</comment>
<keyword id="KW-0030">Aminoacyl-tRNA synthetase</keyword>
<keyword id="KW-0067">ATP-binding</keyword>
<keyword id="KW-0963">Cytoplasm</keyword>
<keyword id="KW-0436">Ligase</keyword>
<keyword id="KW-0547">Nucleotide-binding</keyword>
<keyword id="KW-0648">Protein biosynthesis</keyword>
<evidence type="ECO:0000255" key="1">
    <source>
        <dbReference type="HAMAP-Rule" id="MF_00123"/>
    </source>
</evidence>
<feature type="chain" id="PRO_1000203087" description="Arginine--tRNA ligase">
    <location>
        <begin position="1"/>
        <end position="579"/>
    </location>
</feature>
<feature type="short sequence motif" description="'HIGH' region">
    <location>
        <begin position="127"/>
        <end position="137"/>
    </location>
</feature>
<sequence>MKDTIRQLIQQALTRLTDDGVLPAGLTPAIQVENTKDKSHGDFASNIAMMLAKPAGLKPRQLAEKLVAALPADASVSKVEIAGPGFLNFFQNSDALARRLEVALADERLGVRKHGDLQRVVVDLSSPNLAKEMHVGHLRSTIIGDAVARVLEFLGDVVIRQNHVGDWGTQFGMLLAHLEEKPASAESELADLEQFYRAAKKRFDESEAFADRARELVVRLQAGEPECLRLWQRFNAISLSHCQEVYERLGVRLTPDDIRGESAYNDELPGIVQALRDKGLLTESEGAQCVFLDEFRNAEGNPLPVIVQKAGGGYLYATTDLASMRYRSQVLKADRVLYFVDQRQALHFQMTFAVARRAGFVRDDTALEHMGFGTMNGADGRPFKTRDGGTVKLIDLLDEAEQRAYALVKGKNPELPEEELRHIARAVGIGAVKYADLSKHRTSDYSFNFELMLSFEGNTAPYLLYAYTRVASVFRKLGREIDEIDGSPAPEAGQELALAARLAQFGEVLGNVAEKGLPHLLCAYLYDLAGLFSSFYENCPILTADTPARQQSRLLLAALTGRTLRQGLELLGLEPLERM</sequence>
<accession>C1DHR7</accession>
<proteinExistence type="inferred from homology"/>
<name>SYR_AZOVD</name>
<reference key="1">
    <citation type="journal article" date="2009" name="J. Bacteriol.">
        <title>Genome sequence of Azotobacter vinelandii, an obligate aerobe specialized to support diverse anaerobic metabolic processes.</title>
        <authorList>
            <person name="Setubal J.C."/>
            <person name="Dos Santos P."/>
            <person name="Goldman B.S."/>
            <person name="Ertesvaag H."/>
            <person name="Espin G."/>
            <person name="Rubio L.M."/>
            <person name="Valla S."/>
            <person name="Almeida N.F."/>
            <person name="Balasubramanian D."/>
            <person name="Cromes L."/>
            <person name="Curatti L."/>
            <person name="Du Z."/>
            <person name="Godsy E."/>
            <person name="Goodner B."/>
            <person name="Hellner-Burris K."/>
            <person name="Hernandez J.A."/>
            <person name="Houmiel K."/>
            <person name="Imperial J."/>
            <person name="Kennedy C."/>
            <person name="Larson T.J."/>
            <person name="Latreille P."/>
            <person name="Ligon L.S."/>
            <person name="Lu J."/>
            <person name="Maerk M."/>
            <person name="Miller N.M."/>
            <person name="Norton S."/>
            <person name="O'Carroll I.P."/>
            <person name="Paulsen I."/>
            <person name="Raulfs E.C."/>
            <person name="Roemer R."/>
            <person name="Rosser J."/>
            <person name="Segura D."/>
            <person name="Slater S."/>
            <person name="Stricklin S.L."/>
            <person name="Studholme D.J."/>
            <person name="Sun J."/>
            <person name="Viana C.J."/>
            <person name="Wallin E."/>
            <person name="Wang B."/>
            <person name="Wheeler C."/>
            <person name="Zhu H."/>
            <person name="Dean D.R."/>
            <person name="Dixon R."/>
            <person name="Wood D."/>
        </authorList>
    </citation>
    <scope>NUCLEOTIDE SEQUENCE [LARGE SCALE GENOMIC DNA]</scope>
    <source>
        <strain>DJ / ATCC BAA-1303</strain>
    </source>
</reference>
<protein>
    <recommendedName>
        <fullName evidence="1">Arginine--tRNA ligase</fullName>
        <ecNumber evidence="1">6.1.1.19</ecNumber>
    </recommendedName>
    <alternativeName>
        <fullName evidence="1">Arginyl-tRNA synthetase</fullName>
        <shortName evidence="1">ArgRS</shortName>
    </alternativeName>
</protein>